<name>CNIH4_ARATH</name>
<reference key="1">
    <citation type="journal article" date="2000" name="Nature">
        <title>Sequence and analysis of chromosome 1 of the plant Arabidopsis thaliana.</title>
        <authorList>
            <person name="Theologis A."/>
            <person name="Ecker J.R."/>
            <person name="Palm C.J."/>
            <person name="Federspiel N.A."/>
            <person name="Kaul S."/>
            <person name="White O."/>
            <person name="Alonso J."/>
            <person name="Altafi H."/>
            <person name="Araujo R."/>
            <person name="Bowman C.L."/>
            <person name="Brooks S.Y."/>
            <person name="Buehler E."/>
            <person name="Chan A."/>
            <person name="Chao Q."/>
            <person name="Chen H."/>
            <person name="Cheuk R.F."/>
            <person name="Chin C.W."/>
            <person name="Chung M.K."/>
            <person name="Conn L."/>
            <person name="Conway A.B."/>
            <person name="Conway A.R."/>
            <person name="Creasy T.H."/>
            <person name="Dewar K."/>
            <person name="Dunn P."/>
            <person name="Etgu P."/>
            <person name="Feldblyum T.V."/>
            <person name="Feng J.-D."/>
            <person name="Fong B."/>
            <person name="Fujii C.Y."/>
            <person name="Gill J.E."/>
            <person name="Goldsmith A.D."/>
            <person name="Haas B."/>
            <person name="Hansen N.F."/>
            <person name="Hughes B."/>
            <person name="Huizar L."/>
            <person name="Hunter J.L."/>
            <person name="Jenkins J."/>
            <person name="Johnson-Hopson C."/>
            <person name="Khan S."/>
            <person name="Khaykin E."/>
            <person name="Kim C.J."/>
            <person name="Koo H.L."/>
            <person name="Kremenetskaia I."/>
            <person name="Kurtz D.B."/>
            <person name="Kwan A."/>
            <person name="Lam B."/>
            <person name="Langin-Hooper S."/>
            <person name="Lee A."/>
            <person name="Lee J.M."/>
            <person name="Lenz C.A."/>
            <person name="Li J.H."/>
            <person name="Li Y.-P."/>
            <person name="Lin X."/>
            <person name="Liu S.X."/>
            <person name="Liu Z.A."/>
            <person name="Luros J.S."/>
            <person name="Maiti R."/>
            <person name="Marziali A."/>
            <person name="Militscher J."/>
            <person name="Miranda M."/>
            <person name="Nguyen M."/>
            <person name="Nierman W.C."/>
            <person name="Osborne B.I."/>
            <person name="Pai G."/>
            <person name="Peterson J."/>
            <person name="Pham P.K."/>
            <person name="Rizzo M."/>
            <person name="Rooney T."/>
            <person name="Rowley D."/>
            <person name="Sakano H."/>
            <person name="Salzberg S.L."/>
            <person name="Schwartz J.R."/>
            <person name="Shinn P."/>
            <person name="Southwick A.M."/>
            <person name="Sun H."/>
            <person name="Tallon L.J."/>
            <person name="Tambunga G."/>
            <person name="Toriumi M.J."/>
            <person name="Town C.D."/>
            <person name="Utterback T."/>
            <person name="Van Aken S."/>
            <person name="Vaysberg M."/>
            <person name="Vysotskaia V.S."/>
            <person name="Walker M."/>
            <person name="Wu D."/>
            <person name="Yu G."/>
            <person name="Fraser C.M."/>
            <person name="Venter J.C."/>
            <person name="Davis R.W."/>
        </authorList>
    </citation>
    <scope>NUCLEOTIDE SEQUENCE [LARGE SCALE GENOMIC DNA]</scope>
    <source>
        <strain>cv. Columbia</strain>
    </source>
</reference>
<reference key="2">
    <citation type="journal article" date="2017" name="Plant J.">
        <title>Araport11: a complete reannotation of the Arabidopsis thaliana reference genome.</title>
        <authorList>
            <person name="Cheng C.Y."/>
            <person name="Krishnakumar V."/>
            <person name="Chan A.P."/>
            <person name="Thibaud-Nissen F."/>
            <person name="Schobel S."/>
            <person name="Town C.D."/>
        </authorList>
    </citation>
    <scope>GENOME REANNOTATION</scope>
    <source>
        <strain>cv. Columbia</strain>
    </source>
</reference>
<reference key="3">
    <citation type="journal article" date="2003" name="Science">
        <title>Empirical analysis of transcriptional activity in the Arabidopsis genome.</title>
        <authorList>
            <person name="Yamada K."/>
            <person name="Lim J."/>
            <person name="Dale J.M."/>
            <person name="Chen H."/>
            <person name="Shinn P."/>
            <person name="Palm C.J."/>
            <person name="Southwick A.M."/>
            <person name="Wu H.C."/>
            <person name="Kim C.J."/>
            <person name="Nguyen M."/>
            <person name="Pham P.K."/>
            <person name="Cheuk R.F."/>
            <person name="Karlin-Newmann G."/>
            <person name="Liu S.X."/>
            <person name="Lam B."/>
            <person name="Sakano H."/>
            <person name="Wu T."/>
            <person name="Yu G."/>
            <person name="Miranda M."/>
            <person name="Quach H.L."/>
            <person name="Tripp M."/>
            <person name="Chang C.H."/>
            <person name="Lee J.M."/>
            <person name="Toriumi M.J."/>
            <person name="Chan M.M."/>
            <person name="Tang C.C."/>
            <person name="Onodera C.S."/>
            <person name="Deng J.M."/>
            <person name="Akiyama K."/>
            <person name="Ansari Y."/>
            <person name="Arakawa T."/>
            <person name="Banh J."/>
            <person name="Banno F."/>
            <person name="Bowser L."/>
            <person name="Brooks S.Y."/>
            <person name="Carninci P."/>
            <person name="Chao Q."/>
            <person name="Choy N."/>
            <person name="Enju A."/>
            <person name="Goldsmith A.D."/>
            <person name="Gurjal M."/>
            <person name="Hansen N.F."/>
            <person name="Hayashizaki Y."/>
            <person name="Johnson-Hopson C."/>
            <person name="Hsuan V.W."/>
            <person name="Iida K."/>
            <person name="Karnes M."/>
            <person name="Khan S."/>
            <person name="Koesema E."/>
            <person name="Ishida J."/>
            <person name="Jiang P.X."/>
            <person name="Jones T."/>
            <person name="Kawai J."/>
            <person name="Kamiya A."/>
            <person name="Meyers C."/>
            <person name="Nakajima M."/>
            <person name="Narusaka M."/>
            <person name="Seki M."/>
            <person name="Sakurai T."/>
            <person name="Satou M."/>
            <person name="Tamse R."/>
            <person name="Vaysberg M."/>
            <person name="Wallender E.K."/>
            <person name="Wong C."/>
            <person name="Yamamura Y."/>
            <person name="Yuan S."/>
            <person name="Shinozaki K."/>
            <person name="Davis R.W."/>
            <person name="Theologis A."/>
            <person name="Ecker J.R."/>
        </authorList>
    </citation>
    <scope>NUCLEOTIDE SEQUENCE [LARGE SCALE MRNA]</scope>
    <source>
        <strain>cv. Columbia</strain>
    </source>
</reference>
<reference key="4">
    <citation type="submission" date="2006-07" db="EMBL/GenBank/DDBJ databases">
        <title>Large-scale analysis of RIKEN Arabidopsis full-length (RAFL) cDNAs.</title>
        <authorList>
            <person name="Totoki Y."/>
            <person name="Seki M."/>
            <person name="Ishida J."/>
            <person name="Nakajima M."/>
            <person name="Enju A."/>
            <person name="Kamiya A."/>
            <person name="Narusaka M."/>
            <person name="Shin-i T."/>
            <person name="Nakagawa M."/>
            <person name="Sakamoto N."/>
            <person name="Oishi K."/>
            <person name="Kohara Y."/>
            <person name="Kobayashi M."/>
            <person name="Toyoda A."/>
            <person name="Sakaki Y."/>
            <person name="Sakurai T."/>
            <person name="Iida K."/>
            <person name="Akiyama K."/>
            <person name="Satou M."/>
            <person name="Toyoda T."/>
            <person name="Konagaya A."/>
            <person name="Carninci P."/>
            <person name="Kawai J."/>
            <person name="Hayashizaki Y."/>
            <person name="Shinozaki K."/>
        </authorList>
    </citation>
    <scope>NUCLEOTIDE SEQUENCE [LARGE SCALE MRNA]</scope>
    <source>
        <strain>cv. Columbia</strain>
    </source>
</reference>
<gene>
    <name type="ordered locus">At1g12390</name>
    <name type="ORF">F5O11.11</name>
</gene>
<comment type="interaction">
    <interactant intactId="EBI-4444417">
        <id>Q84W04</id>
    </interactant>
    <interactant intactId="EBI-2010972">
        <id>Q8VZ95</id>
        <label>PVA11</label>
    </interactant>
    <organismsDiffer>false</organismsDiffer>
    <experiments>2</experiments>
</comment>
<comment type="subcellular location">
    <subcellularLocation>
        <location evidence="2">Membrane</location>
        <topology evidence="2">Multi-pass membrane protein</topology>
    </subcellularLocation>
</comment>
<comment type="similarity">
    <text evidence="2">Belongs to the cornichon family.</text>
</comment>
<comment type="sequence caution" evidence="2">
    <conflict type="erroneous gene model prediction">
        <sequence resource="EMBL-CDS" id="AAF79633"/>
    </conflict>
</comment>
<organism>
    <name type="scientific">Arabidopsis thaliana</name>
    <name type="common">Mouse-ear cress</name>
    <dbReference type="NCBI Taxonomy" id="3702"/>
    <lineage>
        <taxon>Eukaryota</taxon>
        <taxon>Viridiplantae</taxon>
        <taxon>Streptophyta</taxon>
        <taxon>Embryophyta</taxon>
        <taxon>Tracheophyta</taxon>
        <taxon>Spermatophyta</taxon>
        <taxon>Magnoliopsida</taxon>
        <taxon>eudicotyledons</taxon>
        <taxon>Gunneridae</taxon>
        <taxon>Pentapetalae</taxon>
        <taxon>rosids</taxon>
        <taxon>malvids</taxon>
        <taxon>Brassicales</taxon>
        <taxon>Brassicaceae</taxon>
        <taxon>Camelineae</taxon>
        <taxon>Arabidopsis</taxon>
    </lineage>
</organism>
<feature type="chain" id="PRO_0000398829" description="Protein cornichon homolog 4">
    <location>
        <begin position="1"/>
        <end position="137"/>
    </location>
</feature>
<feature type="transmembrane region" description="Helical" evidence="1">
    <location>
        <begin position="8"/>
        <end position="28"/>
    </location>
</feature>
<feature type="transmembrane region" description="Helical" evidence="1">
    <location>
        <begin position="53"/>
        <end position="73"/>
    </location>
</feature>
<feature type="transmembrane region" description="Helical" evidence="1">
    <location>
        <begin position="113"/>
        <end position="133"/>
    </location>
</feature>
<dbReference type="EMBL" id="AC025416">
    <property type="protein sequence ID" value="AAF79633.1"/>
    <property type="status" value="ALT_SEQ"/>
    <property type="molecule type" value="Genomic_DNA"/>
</dbReference>
<dbReference type="EMBL" id="CP002684">
    <property type="protein sequence ID" value="AEE28874.1"/>
    <property type="molecule type" value="Genomic_DNA"/>
</dbReference>
<dbReference type="EMBL" id="BT004573">
    <property type="protein sequence ID" value="AAO42819.1"/>
    <property type="molecule type" value="mRNA"/>
</dbReference>
<dbReference type="EMBL" id="AK227496">
    <property type="protein sequence ID" value="BAE99496.1"/>
    <property type="molecule type" value="mRNA"/>
</dbReference>
<dbReference type="RefSeq" id="NP_172701.2">
    <property type="nucleotide sequence ID" value="NM_101111.5"/>
</dbReference>
<dbReference type="SMR" id="Q84W04"/>
<dbReference type="BioGRID" id="23034">
    <property type="interactions" value="8"/>
</dbReference>
<dbReference type="FunCoup" id="Q84W04">
    <property type="interactions" value="3056"/>
</dbReference>
<dbReference type="IntAct" id="Q84W04">
    <property type="interactions" value="8"/>
</dbReference>
<dbReference type="STRING" id="3702.Q84W04"/>
<dbReference type="PaxDb" id="3702-AT1G12390.1"/>
<dbReference type="EnsemblPlants" id="AT1G12390.1">
    <property type="protein sequence ID" value="AT1G12390.1"/>
    <property type="gene ID" value="AT1G12390"/>
</dbReference>
<dbReference type="GeneID" id="837794"/>
<dbReference type="Gramene" id="AT1G12390.1">
    <property type="protein sequence ID" value="AT1G12390.1"/>
    <property type="gene ID" value="AT1G12390"/>
</dbReference>
<dbReference type="KEGG" id="ath:AT1G12390"/>
<dbReference type="Araport" id="AT1G12390"/>
<dbReference type="TAIR" id="AT1G12390"/>
<dbReference type="eggNOG" id="KOG2729">
    <property type="taxonomic scope" value="Eukaryota"/>
</dbReference>
<dbReference type="HOGENOM" id="CLU_112942_3_1_1"/>
<dbReference type="InParanoid" id="Q84W04"/>
<dbReference type="OMA" id="ESWCKMG"/>
<dbReference type="OrthoDB" id="434393at2759"/>
<dbReference type="PhylomeDB" id="Q84W04"/>
<dbReference type="PRO" id="PR:Q84W04"/>
<dbReference type="Proteomes" id="UP000006548">
    <property type="component" value="Chromosome 1"/>
</dbReference>
<dbReference type="ExpressionAtlas" id="Q84W04">
    <property type="expression patterns" value="baseline and differential"/>
</dbReference>
<dbReference type="GO" id="GO:0016020">
    <property type="term" value="C:membrane"/>
    <property type="evidence" value="ECO:0007669"/>
    <property type="project" value="UniProtKB-SubCell"/>
</dbReference>
<dbReference type="GO" id="GO:0016192">
    <property type="term" value="P:vesicle-mediated transport"/>
    <property type="evidence" value="ECO:0007669"/>
    <property type="project" value="InterPro"/>
</dbReference>
<dbReference type="InterPro" id="IPR003377">
    <property type="entry name" value="Cornichon"/>
</dbReference>
<dbReference type="PANTHER" id="PTHR12290">
    <property type="entry name" value="CORNICHON-RELATED"/>
    <property type="match status" value="1"/>
</dbReference>
<dbReference type="Pfam" id="PF03311">
    <property type="entry name" value="Cornichon"/>
    <property type="match status" value="1"/>
</dbReference>
<dbReference type="SMART" id="SM01398">
    <property type="entry name" value="Cornichon"/>
    <property type="match status" value="1"/>
</dbReference>
<proteinExistence type="evidence at protein level"/>
<protein>
    <recommendedName>
        <fullName>Protein cornichon homolog 4</fullName>
    </recommendedName>
</protein>
<evidence type="ECO:0000255" key="1"/>
<evidence type="ECO:0000305" key="2"/>
<sequence>MGDIWTWLISFFFLIALVGIIVYQLVCLADLEFDYINPYDSASRINSVVLPEFIVQGVLCVFYLLTGHWFMTLLCLPYLYYNFHLYSKRQHLVDVTEIFNLLNWEKKKRLFKLAYIVLNLFLTIFWMIYSALDDYED</sequence>
<accession>Q84W04</accession>
<accession>Q9LNA7</accession>
<keyword id="KW-0472">Membrane</keyword>
<keyword id="KW-1185">Reference proteome</keyword>
<keyword id="KW-0812">Transmembrane</keyword>
<keyword id="KW-1133">Transmembrane helix</keyword>